<reference key="1">
    <citation type="submission" date="2009-01" db="EMBL/GenBank/DDBJ databases">
        <title>Complete sequence of Anaeromyxobacter dehalogenans 2CP-1.</title>
        <authorList>
            <person name="Lucas S."/>
            <person name="Copeland A."/>
            <person name="Lapidus A."/>
            <person name="Glavina del Rio T."/>
            <person name="Dalin E."/>
            <person name="Tice H."/>
            <person name="Bruce D."/>
            <person name="Goodwin L."/>
            <person name="Pitluck S."/>
            <person name="Saunders E."/>
            <person name="Brettin T."/>
            <person name="Detter J.C."/>
            <person name="Han C."/>
            <person name="Larimer F."/>
            <person name="Land M."/>
            <person name="Hauser L."/>
            <person name="Kyrpides N."/>
            <person name="Ovchinnikova G."/>
            <person name="Beliaev A.S."/>
            <person name="Richardson P."/>
        </authorList>
    </citation>
    <scope>NUCLEOTIDE SEQUENCE [LARGE SCALE GENOMIC DNA]</scope>
    <source>
        <strain>2CP-1 / ATCC BAA-258</strain>
    </source>
</reference>
<name>MRAY_ANAD2</name>
<accession>B8J8E5</accession>
<dbReference type="EC" id="2.7.8.13" evidence="1"/>
<dbReference type="EMBL" id="CP001359">
    <property type="protein sequence ID" value="ACL67231.1"/>
    <property type="molecule type" value="Genomic_DNA"/>
</dbReference>
<dbReference type="RefSeq" id="WP_011422816.1">
    <property type="nucleotide sequence ID" value="NC_011891.1"/>
</dbReference>
<dbReference type="SMR" id="B8J8E5"/>
<dbReference type="KEGG" id="acp:A2cp1_3908"/>
<dbReference type="HOGENOM" id="CLU_023982_0_0_7"/>
<dbReference type="UniPathway" id="UPA00219"/>
<dbReference type="Proteomes" id="UP000007089">
    <property type="component" value="Chromosome"/>
</dbReference>
<dbReference type="GO" id="GO:0005886">
    <property type="term" value="C:plasma membrane"/>
    <property type="evidence" value="ECO:0007669"/>
    <property type="project" value="UniProtKB-SubCell"/>
</dbReference>
<dbReference type="GO" id="GO:0046872">
    <property type="term" value="F:metal ion binding"/>
    <property type="evidence" value="ECO:0007669"/>
    <property type="project" value="UniProtKB-KW"/>
</dbReference>
<dbReference type="GO" id="GO:0008963">
    <property type="term" value="F:phospho-N-acetylmuramoyl-pentapeptide-transferase activity"/>
    <property type="evidence" value="ECO:0007669"/>
    <property type="project" value="UniProtKB-UniRule"/>
</dbReference>
<dbReference type="GO" id="GO:0051992">
    <property type="term" value="F:UDP-N-acetylmuramoyl-L-alanyl-D-glutamyl-meso-2,6-diaminopimelyl-D-alanyl-D-alanine:undecaprenyl-phosphate transferase activity"/>
    <property type="evidence" value="ECO:0007669"/>
    <property type="project" value="RHEA"/>
</dbReference>
<dbReference type="GO" id="GO:0051301">
    <property type="term" value="P:cell division"/>
    <property type="evidence" value="ECO:0007669"/>
    <property type="project" value="UniProtKB-KW"/>
</dbReference>
<dbReference type="GO" id="GO:0071555">
    <property type="term" value="P:cell wall organization"/>
    <property type="evidence" value="ECO:0007669"/>
    <property type="project" value="UniProtKB-KW"/>
</dbReference>
<dbReference type="GO" id="GO:0009252">
    <property type="term" value="P:peptidoglycan biosynthetic process"/>
    <property type="evidence" value="ECO:0007669"/>
    <property type="project" value="UniProtKB-UniRule"/>
</dbReference>
<dbReference type="GO" id="GO:0008360">
    <property type="term" value="P:regulation of cell shape"/>
    <property type="evidence" value="ECO:0007669"/>
    <property type="project" value="UniProtKB-KW"/>
</dbReference>
<dbReference type="CDD" id="cd06852">
    <property type="entry name" value="GT_MraY"/>
    <property type="match status" value="1"/>
</dbReference>
<dbReference type="HAMAP" id="MF_00038">
    <property type="entry name" value="MraY"/>
    <property type="match status" value="1"/>
</dbReference>
<dbReference type="InterPro" id="IPR000715">
    <property type="entry name" value="Glycosyl_transferase_4"/>
</dbReference>
<dbReference type="InterPro" id="IPR003524">
    <property type="entry name" value="PNAcMuramoyl-5peptid_Trfase"/>
</dbReference>
<dbReference type="InterPro" id="IPR018480">
    <property type="entry name" value="PNAcMuramoyl-5peptid_Trfase_CS"/>
</dbReference>
<dbReference type="NCBIfam" id="TIGR00445">
    <property type="entry name" value="mraY"/>
    <property type="match status" value="1"/>
</dbReference>
<dbReference type="PANTHER" id="PTHR22926">
    <property type="entry name" value="PHOSPHO-N-ACETYLMURAMOYL-PENTAPEPTIDE-TRANSFERASE"/>
    <property type="match status" value="1"/>
</dbReference>
<dbReference type="PANTHER" id="PTHR22926:SF5">
    <property type="entry name" value="PHOSPHO-N-ACETYLMURAMOYL-PENTAPEPTIDE-TRANSFERASE HOMOLOG"/>
    <property type="match status" value="1"/>
</dbReference>
<dbReference type="Pfam" id="PF00953">
    <property type="entry name" value="Glycos_transf_4"/>
    <property type="match status" value="1"/>
</dbReference>
<dbReference type="PROSITE" id="PS01347">
    <property type="entry name" value="MRAY_1"/>
    <property type="match status" value="1"/>
</dbReference>
<dbReference type="PROSITE" id="PS01348">
    <property type="entry name" value="MRAY_2"/>
    <property type="match status" value="1"/>
</dbReference>
<keyword id="KW-0131">Cell cycle</keyword>
<keyword id="KW-0132">Cell division</keyword>
<keyword id="KW-0997">Cell inner membrane</keyword>
<keyword id="KW-1003">Cell membrane</keyword>
<keyword id="KW-0133">Cell shape</keyword>
<keyword id="KW-0961">Cell wall biogenesis/degradation</keyword>
<keyword id="KW-0460">Magnesium</keyword>
<keyword id="KW-0472">Membrane</keyword>
<keyword id="KW-0479">Metal-binding</keyword>
<keyword id="KW-0573">Peptidoglycan synthesis</keyword>
<keyword id="KW-0808">Transferase</keyword>
<keyword id="KW-0812">Transmembrane</keyword>
<keyword id="KW-1133">Transmembrane helix</keyword>
<gene>
    <name evidence="1" type="primary">mraY</name>
    <name type="ordered locus">A2cp1_3908</name>
</gene>
<proteinExistence type="inferred from homology"/>
<sequence length="380" mass="41679">MLYHLLYPLAYKLSLLNVLRYPSFRIVAAGLTAMVLGLLLGPIFIERMRVLQYGSTNVREDTPDTHKKKAGTPSMGGALILASVAIATLLFADLANRFVWAALLVTLGYGAIGFTDDWLKISKKNSKGLAGKKKLVLQVLVVVVVYYACLTDWRFHVEHRFPWVFVGSYVDLHVTLPFVPSRLFNPDLGFLYLPFMVFVVIATSNAVNLTDGLDGLAIGPTVVSAMTFLALSYVAGATIAGFSLAEYLRVPYIPGAEELGVFCSAIFGAGVAFLWYNTYPASVFMGDVGSLALGGGLGMMAVLTKNEFASAILHGVFLTETVSVILQVWSFKTTGKRIFRMAPIHHHYELKGWAEPKIIVRFWIISVMLALVALLSIKLR</sequence>
<evidence type="ECO:0000255" key="1">
    <source>
        <dbReference type="HAMAP-Rule" id="MF_00038"/>
    </source>
</evidence>
<protein>
    <recommendedName>
        <fullName evidence="1">Phospho-N-acetylmuramoyl-pentapeptide-transferase</fullName>
        <ecNumber evidence="1">2.7.8.13</ecNumber>
    </recommendedName>
    <alternativeName>
        <fullName evidence="1">UDP-MurNAc-pentapeptide phosphotransferase</fullName>
    </alternativeName>
</protein>
<organism>
    <name type="scientific">Anaeromyxobacter dehalogenans (strain 2CP-1 / ATCC BAA-258)</name>
    <dbReference type="NCBI Taxonomy" id="455488"/>
    <lineage>
        <taxon>Bacteria</taxon>
        <taxon>Pseudomonadati</taxon>
        <taxon>Myxococcota</taxon>
        <taxon>Myxococcia</taxon>
        <taxon>Myxococcales</taxon>
        <taxon>Cystobacterineae</taxon>
        <taxon>Anaeromyxobacteraceae</taxon>
        <taxon>Anaeromyxobacter</taxon>
    </lineage>
</organism>
<feature type="chain" id="PRO_1000117156" description="Phospho-N-acetylmuramoyl-pentapeptide-transferase">
    <location>
        <begin position="1"/>
        <end position="380"/>
    </location>
</feature>
<feature type="transmembrane region" description="Helical" evidence="1">
    <location>
        <begin position="26"/>
        <end position="46"/>
    </location>
</feature>
<feature type="transmembrane region" description="Helical" evidence="1">
    <location>
        <begin position="75"/>
        <end position="95"/>
    </location>
</feature>
<feature type="transmembrane region" description="Helical" evidence="1">
    <location>
        <begin position="98"/>
        <end position="118"/>
    </location>
</feature>
<feature type="transmembrane region" description="Helical" evidence="1">
    <location>
        <begin position="135"/>
        <end position="155"/>
    </location>
</feature>
<feature type="transmembrane region" description="Helical" evidence="1">
    <location>
        <begin position="161"/>
        <end position="181"/>
    </location>
</feature>
<feature type="transmembrane region" description="Helical" evidence="1">
    <location>
        <begin position="183"/>
        <end position="203"/>
    </location>
</feature>
<feature type="transmembrane region" description="Helical" evidence="1">
    <location>
        <begin position="222"/>
        <end position="242"/>
    </location>
</feature>
<feature type="transmembrane region" description="Helical" evidence="1">
    <location>
        <begin position="259"/>
        <end position="279"/>
    </location>
</feature>
<feature type="transmembrane region" description="Helical" evidence="1">
    <location>
        <begin position="283"/>
        <end position="303"/>
    </location>
</feature>
<feature type="transmembrane region" description="Helical" evidence="1">
    <location>
        <begin position="311"/>
        <end position="331"/>
    </location>
</feature>
<feature type="transmembrane region" description="Helical" evidence="1">
    <location>
        <begin position="357"/>
        <end position="377"/>
    </location>
</feature>
<comment type="function">
    <text evidence="1">Catalyzes the initial step of the lipid cycle reactions in the biosynthesis of the cell wall peptidoglycan: transfers peptidoglycan precursor phospho-MurNAc-pentapeptide from UDP-MurNAc-pentapeptide onto the lipid carrier undecaprenyl phosphate, yielding undecaprenyl-pyrophosphoryl-MurNAc-pentapeptide, known as lipid I.</text>
</comment>
<comment type="catalytic activity">
    <reaction evidence="1">
        <text>UDP-N-acetyl-alpha-D-muramoyl-L-alanyl-gamma-D-glutamyl-meso-2,6-diaminopimeloyl-D-alanyl-D-alanine + di-trans,octa-cis-undecaprenyl phosphate = di-trans,octa-cis-undecaprenyl diphospho-N-acetyl-alpha-D-muramoyl-L-alanyl-D-glutamyl-meso-2,6-diaminopimeloyl-D-alanyl-D-alanine + UMP</text>
        <dbReference type="Rhea" id="RHEA:28386"/>
        <dbReference type="ChEBI" id="CHEBI:57865"/>
        <dbReference type="ChEBI" id="CHEBI:60392"/>
        <dbReference type="ChEBI" id="CHEBI:61386"/>
        <dbReference type="ChEBI" id="CHEBI:61387"/>
        <dbReference type="EC" id="2.7.8.13"/>
    </reaction>
</comment>
<comment type="cofactor">
    <cofactor evidence="1">
        <name>Mg(2+)</name>
        <dbReference type="ChEBI" id="CHEBI:18420"/>
    </cofactor>
</comment>
<comment type="pathway">
    <text evidence="1">Cell wall biogenesis; peptidoglycan biosynthesis.</text>
</comment>
<comment type="subcellular location">
    <subcellularLocation>
        <location evidence="1">Cell inner membrane</location>
        <topology evidence="1">Multi-pass membrane protein</topology>
    </subcellularLocation>
</comment>
<comment type="similarity">
    <text evidence="1">Belongs to the glycosyltransferase 4 family. MraY subfamily.</text>
</comment>